<evidence type="ECO:0000250" key="1"/>
<evidence type="ECO:0000250" key="2">
    <source>
        <dbReference type="UniProtKB" id="P17439"/>
    </source>
</evidence>
<evidence type="ECO:0000255" key="3"/>
<evidence type="ECO:0000269" key="4">
    <source>
    </source>
</evidence>
<evidence type="ECO:0000269" key="5">
    <source>
    </source>
</evidence>
<evidence type="ECO:0000305" key="6"/>
<proteinExistence type="evidence at protein level"/>
<organism>
    <name type="scientific">Caenorhabditis elegans</name>
    <dbReference type="NCBI Taxonomy" id="6239"/>
    <lineage>
        <taxon>Eukaryota</taxon>
        <taxon>Metazoa</taxon>
        <taxon>Ecdysozoa</taxon>
        <taxon>Nematoda</taxon>
        <taxon>Chromadorea</taxon>
        <taxon>Rhabditida</taxon>
        <taxon>Rhabditina</taxon>
        <taxon>Rhabditomorpha</taxon>
        <taxon>Rhabditoidea</taxon>
        <taxon>Rhabditidae</taxon>
        <taxon>Peloderinae</taxon>
        <taxon>Caenorhabditis</taxon>
    </lineage>
</organism>
<protein>
    <recommendedName>
        <fullName>Putative glucosylceramidase 1</fullName>
        <ecNumber>3.2.1.45</ecNumber>
    </recommendedName>
</protein>
<comment type="function">
    <text evidence="2 5">Glucosylceramidase that catalyzes the hydrolysis of glucosylceramides into free ceramides and glucose (By similarity). C.elegans contains specific sphingoid bases, which are unique or different in structure compared to the sphingoid bases found in other animals. Two examples of these distinctive compounds are: 15-methylhexadecasphinganine and 15-methylhexadecasphing-4-enine (PubMed:30155209).</text>
</comment>
<comment type="catalytic activity">
    <reaction evidence="6">
        <text>a beta-D-glucosylceramide + H2O = an N-acyl-sphingoid base + D-glucose</text>
        <dbReference type="Rhea" id="RHEA:81447"/>
        <dbReference type="ChEBI" id="CHEBI:4167"/>
        <dbReference type="ChEBI" id="CHEBI:15377"/>
        <dbReference type="ChEBI" id="CHEBI:83264"/>
        <dbReference type="ChEBI" id="CHEBI:83273"/>
    </reaction>
    <physiologicalReaction direction="left-to-right" evidence="6">
        <dbReference type="Rhea" id="RHEA:81448"/>
    </physiologicalReaction>
</comment>
<comment type="catalytic activity">
    <reaction evidence="2">
        <text>a beta-D-glucosyl-(1&lt;-&gt;1')-N-acylsphing-4-enine + H2O = an N-acylsphing-4-enine + D-glucose</text>
        <dbReference type="Rhea" id="RHEA:13269"/>
        <dbReference type="ChEBI" id="CHEBI:4167"/>
        <dbReference type="ChEBI" id="CHEBI:15377"/>
        <dbReference type="ChEBI" id="CHEBI:22801"/>
        <dbReference type="ChEBI" id="CHEBI:52639"/>
        <dbReference type="EC" id="3.2.1.45"/>
    </reaction>
    <physiologicalReaction direction="left-to-right" evidence="2">
        <dbReference type="Rhea" id="RHEA:13270"/>
    </physiologicalReaction>
</comment>
<comment type="catalytic activity">
    <reaction evidence="6">
        <text>an N-acyl-1-beta-D-glucosyl-15-methylhexadecasphing-4-enine + H2O = an N-acyl-15-methylhexadecasphing-4-enine + D-glucose</text>
        <dbReference type="Rhea" id="RHEA:34755"/>
        <dbReference type="ChEBI" id="CHEBI:4167"/>
        <dbReference type="ChEBI" id="CHEBI:15377"/>
        <dbReference type="ChEBI" id="CHEBI:70815"/>
        <dbReference type="ChEBI" id="CHEBI:70846"/>
    </reaction>
    <physiologicalReaction direction="left-to-right" evidence="6">
        <dbReference type="Rhea" id="RHEA:34756"/>
    </physiologicalReaction>
</comment>
<comment type="pathway">
    <text>Lipid metabolism; sphingolipid metabolism.</text>
</comment>
<comment type="alternative products">
    <event type="alternative splicing"/>
    <isoform>
        <id>O16580-1</id>
        <name>a</name>
        <sequence type="displayed"/>
    </isoform>
    <isoform>
        <id>O16580-2</id>
        <name>b</name>
        <sequence type="described" ref="VSP_045724"/>
    </isoform>
</comment>
<comment type="similarity">
    <text evidence="6">Belongs to the glycosyl hydrolase 30 family.</text>
</comment>
<reference key="1">
    <citation type="journal article" date="1998" name="Science">
        <title>Genome sequence of the nematode C. elegans: a platform for investigating biology.</title>
        <authorList>
            <consortium name="The C. elegans sequencing consortium"/>
        </authorList>
    </citation>
    <scope>NUCLEOTIDE SEQUENCE [LARGE SCALE GENOMIC DNA]</scope>
    <scope>ALTERNATIVE SPLICING</scope>
    <source>
        <strain>Bristol N2</strain>
    </source>
</reference>
<reference key="2">
    <citation type="journal article" date="2007" name="Mol. Cell. Proteomics">
        <title>Proteomics reveals N-linked glycoprotein diversity in Caenorhabditis elegans and suggests an atypical translocation mechanism for integral membrane proteins.</title>
        <authorList>
            <person name="Kaji H."/>
            <person name="Kamiie J."/>
            <person name="Kawakami H."/>
            <person name="Kido K."/>
            <person name="Yamauchi Y."/>
            <person name="Shinkawa T."/>
            <person name="Taoka M."/>
            <person name="Takahashi N."/>
            <person name="Isobe T."/>
        </authorList>
    </citation>
    <scope>GLYCOSYLATION [LARGE SCALE ANALYSIS] AT ASN-168</scope>
    <scope>IDENTIFICATION BY MASS SPECTROMETRY</scope>
    <source>
        <strain>Bristol N2</strain>
    </source>
</reference>
<reference key="3">
    <citation type="journal article" date="2017" name="Chem. Sci.">
        <title>Structure and conserved function of iso-branched sphingoid bases from the nematode Caenorhabditis elegans.</title>
        <authorList>
            <person name="Hannich J.T."/>
            <person name="Mellal D."/>
            <person name="Feng S."/>
            <person name="Zumbuehl A."/>
            <person name="Riezman H."/>
        </authorList>
    </citation>
    <scope>FUNCTION</scope>
</reference>
<name>GLCM1_CAEEL</name>
<accession>O16580</accession>
<accession>A8DZ32</accession>
<sequence>MKSRFLLKIFIFLAVFGVDSVRAADCTEKTFKTGTVCVCSLDSCDEIPPLDITMGQAALYTTSHTGARLHRDVIYATDTEPFGTLHMTIDSSKKYQTIQGFGSTFSDASGANLKSLPDKLSDLIMKQYFSDTGLNLQFGRVPIASTDFSGRVYSYNDVANDYSMQNFNLTKEDFQWKIPYIKNAQKYNPNLKLFAAPWAAPGWLKTTKEMTGPGALNGKAGDNYHQAYAKYFVRFLEEYGKSGISFWGLSTQNQPTLGSDKKNKIQSTLFTAETQRDFIKTDLGPALAASSSGKDVKLLILDDNRGNLPKWADTVLNDMDAAKYVGGIGVHAYQDGETDNHLDETHKKHPNFFILGTEASEGYGSKDTHVDYGNWDRAADTASDILDNMNNWMTGWTERNLILDALGGPSWVSDYTDAPVIAFPAMAQFYKQPMFYAIAHFSHFIKPGAVRIDHSLNVIELEVETTAFLNPDGSKVIVMLNKGSLVSTEHTVVVQDAADSRNHYHFTLPHRAITTLYIQTSQF</sequence>
<feature type="signal peptide" evidence="3">
    <location>
        <begin position="1"/>
        <end position="23"/>
    </location>
</feature>
<feature type="chain" id="PRO_0000421453" description="Putative glucosylceramidase 1">
    <location>
        <begin position="24"/>
        <end position="523"/>
    </location>
</feature>
<feature type="active site" description="Nucleophile" evidence="1">
    <location>
        <position position="358"/>
    </location>
</feature>
<feature type="glycosylation site" description="N-linked (GlcNAc...) asparagine" evidence="4">
    <location>
        <position position="168"/>
    </location>
</feature>
<feature type="splice variant" id="VSP_045724" description="In isoform b." evidence="6">
    <location>
        <begin position="1"/>
        <end position="53"/>
    </location>
</feature>
<gene>
    <name type="primary">gba-1</name>
    <name type="ORF">C33C12.3</name>
</gene>
<keyword id="KW-0025">Alternative splicing</keyword>
<keyword id="KW-0325">Glycoprotein</keyword>
<keyword id="KW-0378">Hydrolase</keyword>
<keyword id="KW-0443">Lipid metabolism</keyword>
<keyword id="KW-1185">Reference proteome</keyword>
<keyword id="KW-0732">Signal</keyword>
<keyword id="KW-0746">Sphingolipid metabolism</keyword>
<dbReference type="EC" id="3.2.1.45"/>
<dbReference type="EMBL" id="FO080754">
    <property type="protein sequence ID" value="CCD66449.1"/>
    <property type="molecule type" value="Genomic_DNA"/>
</dbReference>
<dbReference type="EMBL" id="FO080754">
    <property type="protein sequence ID" value="CCD66450.1"/>
    <property type="molecule type" value="Genomic_DNA"/>
</dbReference>
<dbReference type="PIR" id="T31964">
    <property type="entry name" value="T31964"/>
</dbReference>
<dbReference type="RefSeq" id="NP_001040750.1">
    <molecule id="O16580-1"/>
    <property type="nucleotide sequence ID" value="NM_001047285.3"/>
</dbReference>
<dbReference type="RefSeq" id="NP_001040751.1">
    <molecule id="O16580-2"/>
    <property type="nucleotide sequence ID" value="NM_001047286.3"/>
</dbReference>
<dbReference type="SMR" id="O16580"/>
<dbReference type="BioGRID" id="38942">
    <property type="interactions" value="7"/>
</dbReference>
<dbReference type="DIP" id="DIP-24530N"/>
<dbReference type="FunCoup" id="O16580">
    <property type="interactions" value="144"/>
</dbReference>
<dbReference type="STRING" id="6239.C33C12.3a.1"/>
<dbReference type="CAZy" id="GH30">
    <property type="family name" value="Glycoside Hydrolase Family 30"/>
</dbReference>
<dbReference type="GlyCosmos" id="O16580">
    <property type="glycosylation" value="1 site, No reported glycans"/>
</dbReference>
<dbReference type="iPTMnet" id="O16580"/>
<dbReference type="PaxDb" id="6239-C33C12.3a"/>
<dbReference type="PeptideAtlas" id="O16580"/>
<dbReference type="EnsemblMetazoa" id="C33C12.3a.1">
    <molecule id="O16580-1"/>
    <property type="protein sequence ID" value="C33C12.3a.1"/>
    <property type="gene ID" value="WBGene00016335"/>
</dbReference>
<dbReference type="EnsemblMetazoa" id="C33C12.3b.1">
    <molecule id="O16580-2"/>
    <property type="protein sequence ID" value="C33C12.3b.1"/>
    <property type="gene ID" value="WBGene00016335"/>
</dbReference>
<dbReference type="GeneID" id="173574"/>
<dbReference type="KEGG" id="cel:CELE_C33C12.3"/>
<dbReference type="UCSC" id="C33C12.3a">
    <property type="organism name" value="c. elegans"/>
</dbReference>
<dbReference type="AGR" id="WB:WBGene00016335"/>
<dbReference type="CTD" id="173574"/>
<dbReference type="WormBase" id="C33C12.3a">
    <molecule id="O16580-1"/>
    <property type="protein sequence ID" value="CE29208"/>
    <property type="gene ID" value="WBGene00016335"/>
    <property type="gene designation" value="gba-1"/>
</dbReference>
<dbReference type="WormBase" id="C33C12.3b">
    <molecule id="O16580-2"/>
    <property type="protein sequence ID" value="CE39682"/>
    <property type="gene ID" value="WBGene00016335"/>
    <property type="gene designation" value="gba-1"/>
</dbReference>
<dbReference type="eggNOG" id="KOG2566">
    <property type="taxonomic scope" value="Eukaryota"/>
</dbReference>
<dbReference type="GeneTree" id="ENSGT00390000009464"/>
<dbReference type="InParanoid" id="O16580"/>
<dbReference type="OMA" id="NQIVMQF"/>
<dbReference type="OrthoDB" id="2160638at2759"/>
<dbReference type="PhylomeDB" id="O16580"/>
<dbReference type="UniPathway" id="UPA00222"/>
<dbReference type="PRO" id="PR:O16580"/>
<dbReference type="Proteomes" id="UP000001940">
    <property type="component" value="Chromosome II"/>
</dbReference>
<dbReference type="Bgee" id="WBGene00016335">
    <property type="expression patterns" value="Expressed in larva and 2 other cell types or tissues"/>
</dbReference>
<dbReference type="GO" id="GO:0016020">
    <property type="term" value="C:membrane"/>
    <property type="evidence" value="ECO:0007669"/>
    <property type="project" value="GOC"/>
</dbReference>
<dbReference type="GO" id="GO:0004348">
    <property type="term" value="F:glucosylceramidase activity"/>
    <property type="evidence" value="ECO:0000318"/>
    <property type="project" value="GO_Central"/>
</dbReference>
<dbReference type="GO" id="GO:0006680">
    <property type="term" value="P:glucosylceramide catabolic process"/>
    <property type="evidence" value="ECO:0000318"/>
    <property type="project" value="GO_Central"/>
</dbReference>
<dbReference type="FunFam" id="3.20.20.80:FF:000030">
    <property type="entry name" value="Lysosomal acid glucosylceramidase"/>
    <property type="match status" value="1"/>
</dbReference>
<dbReference type="Gene3D" id="3.20.20.80">
    <property type="entry name" value="Glycosidases"/>
    <property type="match status" value="1"/>
</dbReference>
<dbReference type="InterPro" id="IPR033452">
    <property type="entry name" value="GH30_C"/>
</dbReference>
<dbReference type="InterPro" id="IPR001139">
    <property type="entry name" value="Glyco_hydro_30"/>
</dbReference>
<dbReference type="InterPro" id="IPR033453">
    <property type="entry name" value="Glyco_hydro_30_TIM-barrel"/>
</dbReference>
<dbReference type="InterPro" id="IPR017853">
    <property type="entry name" value="Glycoside_hydrolase_SF"/>
</dbReference>
<dbReference type="PANTHER" id="PTHR11069">
    <property type="entry name" value="GLUCOSYLCERAMIDASE"/>
    <property type="match status" value="1"/>
</dbReference>
<dbReference type="PANTHER" id="PTHR11069:SF37">
    <property type="entry name" value="GLUCOSYLCERAMIDASE 1-RELATED"/>
    <property type="match status" value="1"/>
</dbReference>
<dbReference type="Pfam" id="PF02055">
    <property type="entry name" value="Glyco_hydro_30"/>
    <property type="match status" value="1"/>
</dbReference>
<dbReference type="Pfam" id="PF17189">
    <property type="entry name" value="Glyco_hydro_30C"/>
    <property type="match status" value="1"/>
</dbReference>
<dbReference type="PRINTS" id="PR00843">
    <property type="entry name" value="GLHYDRLASE30"/>
</dbReference>
<dbReference type="SUPFAM" id="SSF51445">
    <property type="entry name" value="(Trans)glycosidases"/>
    <property type="match status" value="1"/>
</dbReference>